<keyword id="KW-0240">DNA-directed RNA polymerase</keyword>
<keyword id="KW-0548">Nucleotidyltransferase</keyword>
<keyword id="KW-0804">Transcription</keyword>
<keyword id="KW-0808">Transferase</keyword>
<name>RPOZ_STAAW</name>
<sequence>MLNPPLNQLTSQIKSKYLIATTAAKRAREIDEQPETELLSEYHSFKPVGRALEEIADGKIRPVISSDYYGKE</sequence>
<accession>P66727</accession>
<accession>Q99UQ8</accession>
<proteinExistence type="inferred from homology"/>
<comment type="function">
    <text evidence="1">Promotes RNA polymerase assembly. Latches the N- and C-terminal regions of the beta' subunit thereby facilitating its interaction with the beta and alpha subunits.</text>
</comment>
<comment type="catalytic activity">
    <reaction evidence="1">
        <text>RNA(n) + a ribonucleoside 5'-triphosphate = RNA(n+1) + diphosphate</text>
        <dbReference type="Rhea" id="RHEA:21248"/>
        <dbReference type="Rhea" id="RHEA-COMP:14527"/>
        <dbReference type="Rhea" id="RHEA-COMP:17342"/>
        <dbReference type="ChEBI" id="CHEBI:33019"/>
        <dbReference type="ChEBI" id="CHEBI:61557"/>
        <dbReference type="ChEBI" id="CHEBI:140395"/>
        <dbReference type="EC" id="2.7.7.6"/>
    </reaction>
</comment>
<comment type="subunit">
    <text evidence="1">The RNAP catalytic core consists of 2 alpha, 1 beta, 1 beta' and 1 omega subunit. When a sigma factor is associated with the core the holoenzyme is formed, which can initiate transcription.</text>
</comment>
<comment type="similarity">
    <text evidence="1">Belongs to the RNA polymerase subunit omega family.</text>
</comment>
<feature type="chain" id="PRO_0000128982" description="DNA-directed RNA polymerase subunit omega">
    <location>
        <begin position="1"/>
        <end position="72"/>
    </location>
</feature>
<protein>
    <recommendedName>
        <fullName evidence="1">DNA-directed RNA polymerase subunit omega</fullName>
        <shortName evidence="1">RNAP omega subunit</shortName>
        <ecNumber evidence="1">2.7.7.6</ecNumber>
    </recommendedName>
    <alternativeName>
        <fullName evidence="1">RNA polymerase omega subunit</fullName>
    </alternativeName>
    <alternativeName>
        <fullName evidence="1">Transcriptase subunit omega</fullName>
    </alternativeName>
</protein>
<gene>
    <name evidence="1" type="primary">rpoZ</name>
    <name type="ordered locus">MW1093</name>
</gene>
<organism>
    <name type="scientific">Staphylococcus aureus (strain MW2)</name>
    <dbReference type="NCBI Taxonomy" id="196620"/>
    <lineage>
        <taxon>Bacteria</taxon>
        <taxon>Bacillati</taxon>
        <taxon>Bacillota</taxon>
        <taxon>Bacilli</taxon>
        <taxon>Bacillales</taxon>
        <taxon>Staphylococcaceae</taxon>
        <taxon>Staphylococcus</taxon>
    </lineage>
</organism>
<dbReference type="EC" id="2.7.7.6" evidence="1"/>
<dbReference type="EMBL" id="BA000033">
    <property type="protein sequence ID" value="BAB94958.1"/>
    <property type="molecule type" value="Genomic_DNA"/>
</dbReference>
<dbReference type="RefSeq" id="WP_000933956.1">
    <property type="nucleotide sequence ID" value="NC_003923.1"/>
</dbReference>
<dbReference type="SMR" id="P66727"/>
<dbReference type="KEGG" id="sam:MW1093"/>
<dbReference type="HOGENOM" id="CLU_125406_6_0_9"/>
<dbReference type="GO" id="GO:0000428">
    <property type="term" value="C:DNA-directed RNA polymerase complex"/>
    <property type="evidence" value="ECO:0007669"/>
    <property type="project" value="UniProtKB-KW"/>
</dbReference>
<dbReference type="GO" id="GO:0003677">
    <property type="term" value="F:DNA binding"/>
    <property type="evidence" value="ECO:0007669"/>
    <property type="project" value="UniProtKB-UniRule"/>
</dbReference>
<dbReference type="GO" id="GO:0003899">
    <property type="term" value="F:DNA-directed RNA polymerase activity"/>
    <property type="evidence" value="ECO:0007669"/>
    <property type="project" value="UniProtKB-UniRule"/>
</dbReference>
<dbReference type="GO" id="GO:0006351">
    <property type="term" value="P:DNA-templated transcription"/>
    <property type="evidence" value="ECO:0007669"/>
    <property type="project" value="UniProtKB-UniRule"/>
</dbReference>
<dbReference type="Gene3D" id="3.90.940.10">
    <property type="match status" value="1"/>
</dbReference>
<dbReference type="HAMAP" id="MF_00366">
    <property type="entry name" value="RNApol_bact_RpoZ"/>
    <property type="match status" value="1"/>
</dbReference>
<dbReference type="InterPro" id="IPR003716">
    <property type="entry name" value="DNA-dir_RNA_pol_omega"/>
</dbReference>
<dbReference type="InterPro" id="IPR006110">
    <property type="entry name" value="Pol_omega/Rpo6/RPB6"/>
</dbReference>
<dbReference type="InterPro" id="IPR036161">
    <property type="entry name" value="RPB6/omega-like_sf"/>
</dbReference>
<dbReference type="NCBIfam" id="TIGR00690">
    <property type="entry name" value="rpoZ"/>
    <property type="match status" value="1"/>
</dbReference>
<dbReference type="PANTHER" id="PTHR34476">
    <property type="entry name" value="DNA-DIRECTED RNA POLYMERASE SUBUNIT OMEGA"/>
    <property type="match status" value="1"/>
</dbReference>
<dbReference type="PANTHER" id="PTHR34476:SF1">
    <property type="entry name" value="DNA-DIRECTED RNA POLYMERASE SUBUNIT OMEGA"/>
    <property type="match status" value="1"/>
</dbReference>
<dbReference type="Pfam" id="PF01192">
    <property type="entry name" value="RNA_pol_Rpb6"/>
    <property type="match status" value="1"/>
</dbReference>
<dbReference type="SMART" id="SM01409">
    <property type="entry name" value="RNA_pol_Rpb6"/>
    <property type="match status" value="1"/>
</dbReference>
<dbReference type="SUPFAM" id="SSF63562">
    <property type="entry name" value="RPB6/omega subunit-like"/>
    <property type="match status" value="1"/>
</dbReference>
<reference key="1">
    <citation type="journal article" date="2002" name="Lancet">
        <title>Genome and virulence determinants of high virulence community-acquired MRSA.</title>
        <authorList>
            <person name="Baba T."/>
            <person name="Takeuchi F."/>
            <person name="Kuroda M."/>
            <person name="Yuzawa H."/>
            <person name="Aoki K."/>
            <person name="Oguchi A."/>
            <person name="Nagai Y."/>
            <person name="Iwama N."/>
            <person name="Asano K."/>
            <person name="Naimi T."/>
            <person name="Kuroda H."/>
            <person name="Cui L."/>
            <person name="Yamamoto K."/>
            <person name="Hiramatsu K."/>
        </authorList>
    </citation>
    <scope>NUCLEOTIDE SEQUENCE [LARGE SCALE GENOMIC DNA]</scope>
    <source>
        <strain>MW2</strain>
    </source>
</reference>
<evidence type="ECO:0000255" key="1">
    <source>
        <dbReference type="HAMAP-Rule" id="MF_00366"/>
    </source>
</evidence>